<organism>
    <name type="scientific">Streptomyces phage phiC31</name>
    <name type="common">Bacteriophage phi-C31</name>
    <dbReference type="NCBI Taxonomy" id="10719"/>
    <lineage>
        <taxon>Viruses</taxon>
        <taxon>Duplodnaviria</taxon>
        <taxon>Heunggongvirae</taxon>
        <taxon>Uroviricota</taxon>
        <taxon>Caudoviricetes</taxon>
        <taxon>Lomovskayavirus</taxon>
    </lineage>
</organism>
<dbReference type="EMBL" id="X12865">
    <property type="protein sequence ID" value="CAA31345.1"/>
    <property type="molecule type" value="Genomic_DNA"/>
</dbReference>
<dbReference type="EMBL" id="X76288">
    <property type="protein sequence ID" value="CAA53911.1"/>
    <property type="molecule type" value="Genomic_DNA"/>
</dbReference>
<dbReference type="EMBL" id="AJ006589">
    <property type="protein sequence ID" value="CAA07123.2"/>
    <property type="molecule type" value="Genomic_DNA"/>
</dbReference>
<dbReference type="PIR" id="S01433">
    <property type="entry name" value="S01433"/>
</dbReference>
<dbReference type="RefSeq" id="NP_047944.2">
    <property type="nucleotide sequence ID" value="NC_001978.3"/>
</dbReference>
<dbReference type="SMR" id="P08979"/>
<dbReference type="GeneID" id="2715886"/>
<dbReference type="KEGG" id="vg:2715886"/>
<dbReference type="OrthoDB" id="31188at10239"/>
<dbReference type="Proteomes" id="UP000002124">
    <property type="component" value="Genome"/>
</dbReference>
<dbReference type="Proteomes" id="UP000335223">
    <property type="component" value="Genome"/>
</dbReference>
<dbReference type="GO" id="GO:0003677">
    <property type="term" value="F:DNA binding"/>
    <property type="evidence" value="ECO:0007669"/>
    <property type="project" value="UniProtKB-KW"/>
</dbReference>
<sequence length="683" mass="74078">MKRVTLGGGKAVHYSTTPDGFMASPACGGNRASERYVPTDADVTCKRCAKILAAEAEREERLNRDPRGDEWMGRTIGDAVTVTLHGRTFDTELTGADHITPGWTVAYVDEDGQRNGTFVVVTDADIQDGDKVSDPRKDAFDKARALGMDWAEALDYANAKTAEMAQPTHVSSVESATHDNDDNKGTGTMATKKLKLKDVRGDVRIGAVPGADAIHALRNAVDENGRNLPMCRTRTKNPIQYWGPAAEQKPELELCAGCSKVVPTGEVSVSEESVEVPGLSMTVSQKSYTPVEGDDKGENMAAKNDTQDVDAQISAVHGHVDNIKTAETVEAVKEAAEAAEGIITTLPTKHRNTLRSTVKEARTARETELTPVTPEAEAAKAEVESRRSADVAEDFNDIEGVPDLIKDGVKLFSQGVDLGLKLTNAGEKLAHVMLTMRQKIVNPATGLPDLTAERKTTKNAAAEVYAQAKKRIADDDVERQGAHNSLVRATQNKASDVLVDWLRAFDGPDRKESLAVASELFGDKLDGLKDDASISEAIYRLYAGQGIELPRYGRTELARYDRRVKAIEGATKELETLTDGDKDANPKDVEALEEKIKELKAEVPEEILTEKLEPKAEKSDAEKTADALKVIRAQVDKAGKRFAKVKTANEKRKAKAELYSIIRAAADAFDLDLSALVTADEDE</sequence>
<accession>P08979</accession>
<accession>Q9T215</accession>
<gene>
    <name type="primary">C</name>
</gene>
<feature type="chain" id="PRO_0000077587" description="Repressor protein C">
    <location>
        <begin position="1"/>
        <end position="683"/>
    </location>
</feature>
<proteinExistence type="predicted"/>
<reference key="1">
    <citation type="journal article" date="1988" name="Mol. Gen. Genet.">
        <title>The repressor gene (c) of the Streptomyces temperate phage phi c31: nucleotide sequence, analysis and functional cloning.</title>
        <authorList>
            <person name="Sinclair R.B."/>
            <person name="Bibb M.J."/>
        </authorList>
    </citation>
    <scope>NUCLEOTIDE SEQUENCE [GENOMIC DNA]</scope>
    <source>
        <strain>Norwich</strain>
    </source>
</reference>
<reference key="2">
    <citation type="journal article" date="1994" name="Gene">
        <title>Sequence of the essential early region of phi C31, a temperate phage of Streptomyces spp. with unusual features in its lytic development.</title>
        <authorList>
            <person name="Hartley N.M."/>
            <person name="Murphy G.O."/>
            <person name="Bruton C.J."/>
            <person name="Chater K.F."/>
        </authorList>
    </citation>
    <scope>NUCLEOTIDE SEQUENCE [GENOMIC DNA]</scope>
</reference>
<reference key="3">
    <citation type="journal article" date="1999" name="Nucleic Acids Res.">
        <title>The complete genome sequence of the Streptomyces temperate phage straight phiC31: evolutionary relationships to other viruses.</title>
        <authorList>
            <person name="Smith M.C."/>
            <person name="Burns R.N."/>
            <person name="Wilson S.E."/>
            <person name="Gregory M.A."/>
        </authorList>
    </citation>
    <scope>NUCLEOTIDE SEQUENCE [LARGE SCALE GENOMIC DNA]</scope>
    <source>
        <strain>Norwich</strain>
    </source>
</reference>
<name>RPC_BPPHC</name>
<organismHost>
    <name type="scientific">Streptomyces coelicolor</name>
    <dbReference type="NCBI Taxonomy" id="1902"/>
</organismHost>
<keyword id="KW-0238">DNA-binding</keyword>
<keyword id="KW-1185">Reference proteome</keyword>
<keyword id="KW-0678">Repressor</keyword>
<keyword id="KW-0804">Transcription</keyword>
<keyword id="KW-0805">Transcription regulation</keyword>
<protein>
    <recommendedName>
        <fullName>Repressor protein C</fullName>
    </recommendedName>
</protein>